<name>TENA_STAAS</name>
<gene>
    <name type="primary">tenA</name>
    <name type="ordered locus">SAS1998</name>
</gene>
<keyword id="KW-0378">Hydrolase</keyword>
<keyword id="KW-0784">Thiamine biosynthesis</keyword>
<dbReference type="EC" id="3.5.99.2" evidence="2"/>
<dbReference type="EMBL" id="BX571857">
    <property type="protein sequence ID" value="CAG43805.1"/>
    <property type="molecule type" value="Genomic_DNA"/>
</dbReference>
<dbReference type="RefSeq" id="WP_000396077.1">
    <property type="nucleotide sequence ID" value="NC_002953.3"/>
</dbReference>
<dbReference type="SMR" id="Q6G7L6"/>
<dbReference type="KEGG" id="sas:SAS1998"/>
<dbReference type="HOGENOM" id="CLU_077537_3_1_9"/>
<dbReference type="UniPathway" id="UPA00060"/>
<dbReference type="GO" id="GO:0005829">
    <property type="term" value="C:cytosol"/>
    <property type="evidence" value="ECO:0007669"/>
    <property type="project" value="TreeGrafter"/>
</dbReference>
<dbReference type="GO" id="GO:0050334">
    <property type="term" value="F:thiaminase activity"/>
    <property type="evidence" value="ECO:0007669"/>
    <property type="project" value="UniProtKB-EC"/>
</dbReference>
<dbReference type="GO" id="GO:0009228">
    <property type="term" value="P:thiamine biosynthetic process"/>
    <property type="evidence" value="ECO:0007669"/>
    <property type="project" value="UniProtKB-KW"/>
</dbReference>
<dbReference type="GO" id="GO:0009229">
    <property type="term" value="P:thiamine diphosphate biosynthetic process"/>
    <property type="evidence" value="ECO:0007669"/>
    <property type="project" value="UniProtKB-UniPathway"/>
</dbReference>
<dbReference type="CDD" id="cd19360">
    <property type="entry name" value="TenA_C_SaTenA-like"/>
    <property type="match status" value="1"/>
</dbReference>
<dbReference type="FunFam" id="1.20.910.10:FF:000010">
    <property type="entry name" value="Aminopyrimidine aminohydrolase"/>
    <property type="match status" value="1"/>
</dbReference>
<dbReference type="Gene3D" id="1.20.910.10">
    <property type="entry name" value="Heme oxygenase-like"/>
    <property type="match status" value="1"/>
</dbReference>
<dbReference type="InterPro" id="IPR016084">
    <property type="entry name" value="Haem_Oase-like_multi-hlx"/>
</dbReference>
<dbReference type="InterPro" id="IPR004305">
    <property type="entry name" value="Thiaminase-2/PQQC"/>
</dbReference>
<dbReference type="InterPro" id="IPR027574">
    <property type="entry name" value="Thiaminase_II"/>
</dbReference>
<dbReference type="InterPro" id="IPR050967">
    <property type="entry name" value="Thiamine_Salvage_TenA"/>
</dbReference>
<dbReference type="NCBIfam" id="TIGR04306">
    <property type="entry name" value="salvage_TenA"/>
    <property type="match status" value="1"/>
</dbReference>
<dbReference type="PANTHER" id="PTHR43198">
    <property type="entry name" value="BIFUNCTIONAL TH2 PROTEIN"/>
    <property type="match status" value="1"/>
</dbReference>
<dbReference type="PANTHER" id="PTHR43198:SF2">
    <property type="entry name" value="SI:CH1073-67J19.1-RELATED"/>
    <property type="match status" value="1"/>
</dbReference>
<dbReference type="Pfam" id="PF03070">
    <property type="entry name" value="TENA_THI-4"/>
    <property type="match status" value="1"/>
</dbReference>
<dbReference type="SUPFAM" id="SSF48613">
    <property type="entry name" value="Heme oxygenase-like"/>
    <property type="match status" value="1"/>
</dbReference>
<sequence length="229" mass="26729">MEFSQKLYQAAKPIINDIYEDDFIQKMLSGDIGADALRHYLKADAAYLKEFTNLYALLIPKMNSMNDVKFLVEQIEFMVEGEVLAHDILAQIVGESYEEIIKTKVWPPSGDHYIKHMYFQAHSRENAIYTIAAMAPCPYIYAELAKRSQSDHKLNREKDTAKWFDFYSTEMDDIINVFEALMNKLAESMSDKELEQVKQVFLESCIHERRFFNMAMTLEQWEFGGKVND</sequence>
<feature type="chain" id="PRO_0000293608" description="Aminopyrimidine aminohydrolase">
    <location>
        <begin position="1"/>
        <end position="229"/>
    </location>
</feature>
<feature type="active site" description="Nucleophile" evidence="1">
    <location>
        <position position="137"/>
    </location>
</feature>
<feature type="active site" description="Proton donor" evidence="1">
    <location>
        <position position="208"/>
    </location>
</feature>
<feature type="binding site" evidence="1">
    <location>
        <position position="44"/>
    </location>
    <ligand>
        <name>substrate</name>
    </ligand>
</feature>
<feature type="binding site" evidence="1">
    <location>
        <position position="141"/>
    </location>
    <ligand>
        <name>substrate</name>
    </ligand>
</feature>
<feature type="binding site" evidence="1">
    <location>
        <position position="167"/>
    </location>
    <ligand>
        <name>substrate</name>
    </ligand>
</feature>
<feature type="site" description="Increases nucleophilicity of active site Cys" evidence="1">
    <location>
        <position position="47"/>
    </location>
</feature>
<evidence type="ECO:0000250" key="1">
    <source>
        <dbReference type="UniProtKB" id="P25052"/>
    </source>
</evidence>
<evidence type="ECO:0000250" key="2">
    <source>
        <dbReference type="UniProtKB" id="Q6GEY1"/>
    </source>
</evidence>
<evidence type="ECO:0000305" key="3"/>
<reference key="1">
    <citation type="journal article" date="2004" name="Proc. Natl. Acad. Sci. U.S.A.">
        <title>Complete genomes of two clinical Staphylococcus aureus strains: evidence for the rapid evolution of virulence and drug resistance.</title>
        <authorList>
            <person name="Holden M.T.G."/>
            <person name="Feil E.J."/>
            <person name="Lindsay J.A."/>
            <person name="Peacock S.J."/>
            <person name="Day N.P.J."/>
            <person name="Enright M.C."/>
            <person name="Foster T.J."/>
            <person name="Moore C.E."/>
            <person name="Hurst L."/>
            <person name="Atkin R."/>
            <person name="Barron A."/>
            <person name="Bason N."/>
            <person name="Bentley S.D."/>
            <person name="Chillingworth C."/>
            <person name="Chillingworth T."/>
            <person name="Churcher C."/>
            <person name="Clark L."/>
            <person name="Corton C."/>
            <person name="Cronin A."/>
            <person name="Doggett J."/>
            <person name="Dowd L."/>
            <person name="Feltwell T."/>
            <person name="Hance Z."/>
            <person name="Harris B."/>
            <person name="Hauser H."/>
            <person name="Holroyd S."/>
            <person name="Jagels K."/>
            <person name="James K.D."/>
            <person name="Lennard N."/>
            <person name="Line A."/>
            <person name="Mayes R."/>
            <person name="Moule S."/>
            <person name="Mungall K."/>
            <person name="Ormond D."/>
            <person name="Quail M.A."/>
            <person name="Rabbinowitsch E."/>
            <person name="Rutherford K.M."/>
            <person name="Sanders M."/>
            <person name="Sharp S."/>
            <person name="Simmonds M."/>
            <person name="Stevens K."/>
            <person name="Whitehead S."/>
            <person name="Barrell B.G."/>
            <person name="Spratt B.G."/>
            <person name="Parkhill J."/>
        </authorList>
    </citation>
    <scope>NUCLEOTIDE SEQUENCE [LARGE SCALE GENOMIC DNA]</scope>
    <source>
        <strain>MSSA476</strain>
    </source>
</reference>
<accession>Q6G7L6</accession>
<organism>
    <name type="scientific">Staphylococcus aureus (strain MSSA476)</name>
    <dbReference type="NCBI Taxonomy" id="282459"/>
    <lineage>
        <taxon>Bacteria</taxon>
        <taxon>Bacillati</taxon>
        <taxon>Bacillota</taxon>
        <taxon>Bacilli</taxon>
        <taxon>Bacillales</taxon>
        <taxon>Staphylococcaceae</taxon>
        <taxon>Staphylococcus</taxon>
    </lineage>
</organism>
<comment type="function">
    <text evidence="1 2">Catalyzes an amino-pyrimidine hydrolysis reaction at the C5' of the pyrimidine moiety of thiamine compounds, a reaction that is part of a thiamine salvage pathway. Thus, catalyzes the conversion of 4-amino-5-aminomethyl-2-methylpyrimidine to 4-amino-5-hydroxymethyl-2-methylpyrimidine (HMP). Is also able to catalyze the hydrolytic cleavage of thiamine; however, this thiaminase activity may not be physiologically relevant. Therefore, is probably involved in the regeneration of the thiamine pyrimidine from thiamine degraded products present in the environment, rather than in thiamine degradation.</text>
</comment>
<comment type="catalytic activity">
    <reaction evidence="1">
        <text>4-amino-5-aminomethyl-2-methylpyrimidine + H2O = 4-amino-5-hydroxymethyl-2-methylpyrimidine + NH4(+)</text>
        <dbReference type="Rhea" id="RHEA:31799"/>
        <dbReference type="ChEBI" id="CHEBI:15377"/>
        <dbReference type="ChEBI" id="CHEBI:16892"/>
        <dbReference type="ChEBI" id="CHEBI:28938"/>
        <dbReference type="ChEBI" id="CHEBI:63416"/>
        <dbReference type="EC" id="3.5.99.2"/>
    </reaction>
</comment>
<comment type="catalytic activity">
    <reaction evidence="2">
        <text>thiamine + H2O = 5-(2-hydroxyethyl)-4-methylthiazole + 4-amino-5-hydroxymethyl-2-methylpyrimidine + H(+)</text>
        <dbReference type="Rhea" id="RHEA:17509"/>
        <dbReference type="ChEBI" id="CHEBI:15377"/>
        <dbReference type="ChEBI" id="CHEBI:15378"/>
        <dbReference type="ChEBI" id="CHEBI:16892"/>
        <dbReference type="ChEBI" id="CHEBI:17957"/>
        <dbReference type="ChEBI" id="CHEBI:18385"/>
        <dbReference type="EC" id="3.5.99.2"/>
    </reaction>
</comment>
<comment type="pathway">
    <text evidence="1">Cofactor biosynthesis; thiamine diphosphate biosynthesis.</text>
</comment>
<comment type="subunit">
    <text evidence="2">Homotetramer.</text>
</comment>
<comment type="similarity">
    <text evidence="3">Belongs to the TenA family.</text>
</comment>
<proteinExistence type="inferred from homology"/>
<protein>
    <recommendedName>
        <fullName evidence="1">Aminopyrimidine aminohydrolase</fullName>
        <ecNumber evidence="2">3.5.99.2</ecNumber>
    </recommendedName>
    <alternativeName>
        <fullName evidence="2">Thiaminase II</fullName>
    </alternativeName>
</protein>